<name>Y4443_BACCZ</name>
<proteinExistence type="inferred from homology"/>
<dbReference type="EMBL" id="CP000001">
    <property type="protein sequence ID" value="AAU15827.1"/>
    <property type="molecule type" value="Genomic_DNA"/>
</dbReference>
<dbReference type="RefSeq" id="WP_000784593.1">
    <property type="nucleotide sequence ID" value="NZ_CP009968.1"/>
</dbReference>
<dbReference type="KEGG" id="bcz:BCE33L4443"/>
<dbReference type="PATRIC" id="fig|288681.22.peg.926"/>
<dbReference type="Proteomes" id="UP000002612">
    <property type="component" value="Chromosome"/>
</dbReference>
<dbReference type="HAMAP" id="MF_01548">
    <property type="entry name" value="UPF0354"/>
    <property type="match status" value="1"/>
</dbReference>
<dbReference type="InterPro" id="IPR010838">
    <property type="entry name" value="DUF1444"/>
</dbReference>
<dbReference type="NCBIfam" id="NF010189">
    <property type="entry name" value="PRK13668.1"/>
    <property type="match status" value="1"/>
</dbReference>
<dbReference type="Pfam" id="PF07285">
    <property type="entry name" value="DUF1444"/>
    <property type="match status" value="1"/>
</dbReference>
<dbReference type="PIRSF" id="PIRSF012562">
    <property type="entry name" value="UCP012562"/>
    <property type="match status" value="1"/>
</dbReference>
<protein>
    <recommendedName>
        <fullName evidence="1">UPF0354 protein BCE33L4443</fullName>
    </recommendedName>
</protein>
<accession>Q632Z7</accession>
<sequence>MKMTSKKMKDELMKKLSRPEWDFHYDSEKEVLRIEQKDSKKGINVSLPGVVAKWEVNKEKAIEEVAYYVQEALIAMHKEENSAAKILPVIRSTSFPKQAEEGNPFIMTDHTAETRIYYALDSNKTYRLIDERLLQKLGLTEQQVREMALFNARSLSYEFKQDTVAGNTFYFLNTNDGYDATRILNESLLQSMREKISGDMVVAVPHQDVLIIADIVNEIGYDIIAQMTMKFFAEGHVPITSLSFVYEDGDFEPIFILAKNRKKTDGKEKG</sequence>
<organism>
    <name type="scientific">Bacillus cereus (strain ZK / E33L)</name>
    <dbReference type="NCBI Taxonomy" id="288681"/>
    <lineage>
        <taxon>Bacteria</taxon>
        <taxon>Bacillati</taxon>
        <taxon>Bacillota</taxon>
        <taxon>Bacilli</taxon>
        <taxon>Bacillales</taxon>
        <taxon>Bacillaceae</taxon>
        <taxon>Bacillus</taxon>
        <taxon>Bacillus cereus group</taxon>
    </lineage>
</organism>
<comment type="similarity">
    <text evidence="1">Belongs to the UPF0354 family.</text>
</comment>
<gene>
    <name type="ordered locus">BCE33L4443</name>
</gene>
<reference key="1">
    <citation type="journal article" date="2006" name="J. Bacteriol.">
        <title>Pathogenomic sequence analysis of Bacillus cereus and Bacillus thuringiensis isolates closely related to Bacillus anthracis.</title>
        <authorList>
            <person name="Han C.S."/>
            <person name="Xie G."/>
            <person name="Challacombe J.F."/>
            <person name="Altherr M.R."/>
            <person name="Bhotika S.S."/>
            <person name="Bruce D."/>
            <person name="Campbell C.S."/>
            <person name="Campbell M.L."/>
            <person name="Chen J."/>
            <person name="Chertkov O."/>
            <person name="Cleland C."/>
            <person name="Dimitrijevic M."/>
            <person name="Doggett N.A."/>
            <person name="Fawcett J.J."/>
            <person name="Glavina T."/>
            <person name="Goodwin L.A."/>
            <person name="Hill K.K."/>
            <person name="Hitchcock P."/>
            <person name="Jackson P.J."/>
            <person name="Keim P."/>
            <person name="Kewalramani A.R."/>
            <person name="Longmire J."/>
            <person name="Lucas S."/>
            <person name="Malfatti S."/>
            <person name="McMurry K."/>
            <person name="Meincke L.J."/>
            <person name="Misra M."/>
            <person name="Moseman B.L."/>
            <person name="Mundt M."/>
            <person name="Munk A.C."/>
            <person name="Okinaka R.T."/>
            <person name="Parson-Quintana B."/>
            <person name="Reilly L.P."/>
            <person name="Richardson P."/>
            <person name="Robinson D.L."/>
            <person name="Rubin E."/>
            <person name="Saunders E."/>
            <person name="Tapia R."/>
            <person name="Tesmer J.G."/>
            <person name="Thayer N."/>
            <person name="Thompson L.S."/>
            <person name="Tice H."/>
            <person name="Ticknor L.O."/>
            <person name="Wills P.L."/>
            <person name="Brettin T.S."/>
            <person name="Gilna P."/>
        </authorList>
    </citation>
    <scope>NUCLEOTIDE SEQUENCE [LARGE SCALE GENOMIC DNA]</scope>
    <source>
        <strain>ZK / E33L</strain>
    </source>
</reference>
<feature type="chain" id="PRO_0000171096" description="UPF0354 protein BCE33L4443">
    <location>
        <begin position="1"/>
        <end position="270"/>
    </location>
</feature>
<evidence type="ECO:0000255" key="1">
    <source>
        <dbReference type="HAMAP-Rule" id="MF_01548"/>
    </source>
</evidence>